<gene>
    <name evidence="1" type="primary">argB</name>
    <name type="ordered locus">BQ2027_MB1682</name>
</gene>
<proteinExistence type="inferred from homology"/>
<keyword id="KW-0028">Amino-acid biosynthesis</keyword>
<keyword id="KW-0055">Arginine biosynthesis</keyword>
<keyword id="KW-0067">ATP-binding</keyword>
<keyword id="KW-0963">Cytoplasm</keyword>
<keyword id="KW-0418">Kinase</keyword>
<keyword id="KW-0547">Nucleotide-binding</keyword>
<keyword id="KW-1185">Reference proteome</keyword>
<keyword id="KW-0808">Transferase</keyword>
<feature type="chain" id="PRO_0000112634" description="Acetylglutamate kinase">
    <location>
        <begin position="1"/>
        <end position="294"/>
    </location>
</feature>
<feature type="binding site" evidence="1">
    <location>
        <begin position="69"/>
        <end position="70"/>
    </location>
    <ligand>
        <name>substrate</name>
    </ligand>
</feature>
<feature type="binding site" evidence="1">
    <location>
        <position position="91"/>
    </location>
    <ligand>
        <name>substrate</name>
    </ligand>
</feature>
<feature type="binding site" evidence="1">
    <location>
        <position position="190"/>
    </location>
    <ligand>
        <name>substrate</name>
    </ligand>
</feature>
<feature type="site" description="Transition state stabilizer" evidence="1">
    <location>
        <position position="34"/>
    </location>
</feature>
<feature type="site" description="Transition state stabilizer" evidence="1">
    <location>
        <position position="251"/>
    </location>
</feature>
<sequence length="294" mass="30937">MSRIEALPTHIKAQVLAEALPWLKQLHGKVVVVKYGGNAMTDDTLRRAFAADMAFLRNCGIHPVVVHGGGPQITAMLRRLGIEGDFKGGFRVTTPEVLDVARMVLFGQVGRELVNLINAHGPYAVGITGEDAQLFTAVRRSVTVDGVATDIGLVGDVDQVNTAAMLDLVAAGRIPVVSTLAPDADGVVHNINADTAAAAVAEALGAEKLLMLTDIDGLYTRWPDRDSLVSEIDTGTLAQLLPTLESGMVPKVEACLRAVIGGVPSAHIIDGRVTHCVLVELFTDAGTGTKVVRG</sequence>
<dbReference type="EC" id="2.7.2.8" evidence="1"/>
<dbReference type="EMBL" id="LT708304">
    <property type="protein sequence ID" value="SIU00285.1"/>
    <property type="molecule type" value="Genomic_DNA"/>
</dbReference>
<dbReference type="RefSeq" id="NP_855334.1">
    <property type="nucleotide sequence ID" value="NC_002945.3"/>
</dbReference>
<dbReference type="RefSeq" id="WP_003408161.1">
    <property type="nucleotide sequence ID" value="NC_002945.4"/>
</dbReference>
<dbReference type="SMR" id="P0A4Y7"/>
<dbReference type="KEGG" id="mbo:BQ2027_MB1682"/>
<dbReference type="PATRIC" id="fig|233413.5.peg.1835"/>
<dbReference type="UniPathway" id="UPA00068">
    <property type="reaction ID" value="UER00107"/>
</dbReference>
<dbReference type="Proteomes" id="UP000001419">
    <property type="component" value="Chromosome"/>
</dbReference>
<dbReference type="GO" id="GO:0005737">
    <property type="term" value="C:cytoplasm"/>
    <property type="evidence" value="ECO:0007669"/>
    <property type="project" value="UniProtKB-SubCell"/>
</dbReference>
<dbReference type="GO" id="GO:0003991">
    <property type="term" value="F:acetylglutamate kinase activity"/>
    <property type="evidence" value="ECO:0007669"/>
    <property type="project" value="UniProtKB-UniRule"/>
</dbReference>
<dbReference type="GO" id="GO:0005524">
    <property type="term" value="F:ATP binding"/>
    <property type="evidence" value="ECO:0007669"/>
    <property type="project" value="UniProtKB-UniRule"/>
</dbReference>
<dbReference type="GO" id="GO:0042450">
    <property type="term" value="P:arginine biosynthetic process via ornithine"/>
    <property type="evidence" value="ECO:0007669"/>
    <property type="project" value="UniProtKB-UniRule"/>
</dbReference>
<dbReference type="GO" id="GO:0006526">
    <property type="term" value="P:L-arginine biosynthetic process"/>
    <property type="evidence" value="ECO:0007669"/>
    <property type="project" value="UniProtKB-UniPathway"/>
</dbReference>
<dbReference type="CDD" id="cd04250">
    <property type="entry name" value="AAK_NAGK-C"/>
    <property type="match status" value="1"/>
</dbReference>
<dbReference type="FunFam" id="3.40.1160.10:FF:000015">
    <property type="entry name" value="Acetylglutamate kinase"/>
    <property type="match status" value="1"/>
</dbReference>
<dbReference type="Gene3D" id="3.40.1160.10">
    <property type="entry name" value="Acetylglutamate kinase-like"/>
    <property type="match status" value="1"/>
</dbReference>
<dbReference type="HAMAP" id="MF_00082">
    <property type="entry name" value="ArgB"/>
    <property type="match status" value="1"/>
</dbReference>
<dbReference type="InterPro" id="IPR036393">
    <property type="entry name" value="AceGlu_kinase-like_sf"/>
</dbReference>
<dbReference type="InterPro" id="IPR004662">
    <property type="entry name" value="AcgluKinase_fam"/>
</dbReference>
<dbReference type="InterPro" id="IPR037528">
    <property type="entry name" value="ArgB"/>
</dbReference>
<dbReference type="InterPro" id="IPR001048">
    <property type="entry name" value="Asp/Glu/Uridylate_kinase"/>
</dbReference>
<dbReference type="InterPro" id="IPR001057">
    <property type="entry name" value="Glu/AcGlu_kinase"/>
</dbReference>
<dbReference type="InterPro" id="IPR041727">
    <property type="entry name" value="NAGK-C"/>
</dbReference>
<dbReference type="NCBIfam" id="TIGR00761">
    <property type="entry name" value="argB"/>
    <property type="match status" value="1"/>
</dbReference>
<dbReference type="PANTHER" id="PTHR23342">
    <property type="entry name" value="N-ACETYLGLUTAMATE SYNTHASE"/>
    <property type="match status" value="1"/>
</dbReference>
<dbReference type="PANTHER" id="PTHR23342:SF0">
    <property type="entry name" value="N-ACETYLGLUTAMATE SYNTHASE, MITOCHONDRIAL"/>
    <property type="match status" value="1"/>
</dbReference>
<dbReference type="Pfam" id="PF00696">
    <property type="entry name" value="AA_kinase"/>
    <property type="match status" value="1"/>
</dbReference>
<dbReference type="PIRSF" id="PIRSF000728">
    <property type="entry name" value="NAGK"/>
    <property type="match status" value="1"/>
</dbReference>
<dbReference type="PRINTS" id="PR00474">
    <property type="entry name" value="GLU5KINASE"/>
</dbReference>
<dbReference type="SUPFAM" id="SSF53633">
    <property type="entry name" value="Carbamate kinase-like"/>
    <property type="match status" value="1"/>
</dbReference>
<evidence type="ECO:0000255" key="1">
    <source>
        <dbReference type="HAMAP-Rule" id="MF_00082"/>
    </source>
</evidence>
<reference key="1">
    <citation type="journal article" date="2003" name="Proc. Natl. Acad. Sci. U.S.A.">
        <title>The complete genome sequence of Mycobacterium bovis.</title>
        <authorList>
            <person name="Garnier T."/>
            <person name="Eiglmeier K."/>
            <person name="Camus J.-C."/>
            <person name="Medina N."/>
            <person name="Mansoor H."/>
            <person name="Pryor M."/>
            <person name="Duthoy S."/>
            <person name="Grondin S."/>
            <person name="Lacroix C."/>
            <person name="Monsempe C."/>
            <person name="Simon S."/>
            <person name="Harris B."/>
            <person name="Atkin R."/>
            <person name="Doggett J."/>
            <person name="Mayes R."/>
            <person name="Keating L."/>
            <person name="Wheeler P.R."/>
            <person name="Parkhill J."/>
            <person name="Barrell B.G."/>
            <person name="Cole S.T."/>
            <person name="Gordon S.V."/>
            <person name="Hewinson R.G."/>
        </authorList>
    </citation>
    <scope>NUCLEOTIDE SEQUENCE [LARGE SCALE GENOMIC DNA]</scope>
    <source>
        <strain>ATCC BAA-935 / AF2122/97</strain>
    </source>
</reference>
<reference key="2">
    <citation type="journal article" date="2017" name="Genome Announc.">
        <title>Updated reference genome sequence and annotation of Mycobacterium bovis AF2122/97.</title>
        <authorList>
            <person name="Malone K.M."/>
            <person name="Farrell D."/>
            <person name="Stuber T.P."/>
            <person name="Schubert O.T."/>
            <person name="Aebersold R."/>
            <person name="Robbe-Austerman S."/>
            <person name="Gordon S.V."/>
        </authorList>
    </citation>
    <scope>NUCLEOTIDE SEQUENCE [LARGE SCALE GENOMIC DNA]</scope>
    <scope>GENOME REANNOTATION</scope>
    <source>
        <strain>ATCC BAA-935 / AF2122/97</strain>
    </source>
</reference>
<accession>P0A4Y7</accession>
<accession>A0A1R3XYY3</accession>
<accession>P94989</accession>
<accession>X2BIX2</accession>
<name>ARGB_MYCBO</name>
<comment type="function">
    <text evidence="1">Catalyzes the ATP-dependent phosphorylation of N-acetyl-L-glutamate.</text>
</comment>
<comment type="catalytic activity">
    <reaction evidence="1">
        <text>N-acetyl-L-glutamate + ATP = N-acetyl-L-glutamyl 5-phosphate + ADP</text>
        <dbReference type="Rhea" id="RHEA:14629"/>
        <dbReference type="ChEBI" id="CHEBI:30616"/>
        <dbReference type="ChEBI" id="CHEBI:44337"/>
        <dbReference type="ChEBI" id="CHEBI:57936"/>
        <dbReference type="ChEBI" id="CHEBI:456216"/>
        <dbReference type="EC" id="2.7.2.8"/>
    </reaction>
</comment>
<comment type="pathway">
    <text evidence="1">Amino-acid biosynthesis; L-arginine biosynthesis; N(2)-acetyl-L-ornithine from L-glutamate: step 2/4.</text>
</comment>
<comment type="subcellular location">
    <subcellularLocation>
        <location evidence="1">Cytoplasm</location>
    </subcellularLocation>
</comment>
<comment type="similarity">
    <text evidence="1">Belongs to the acetylglutamate kinase family. ArgB subfamily.</text>
</comment>
<protein>
    <recommendedName>
        <fullName evidence="1">Acetylglutamate kinase</fullName>
        <ecNumber evidence="1">2.7.2.8</ecNumber>
    </recommendedName>
    <alternativeName>
        <fullName evidence="1">N-acetyl-L-glutamate 5-phosphotransferase</fullName>
    </alternativeName>
    <alternativeName>
        <fullName evidence="1">NAG kinase</fullName>
        <shortName evidence="1">NAGK</shortName>
    </alternativeName>
</protein>
<organism>
    <name type="scientific">Mycobacterium bovis (strain ATCC BAA-935 / AF2122/97)</name>
    <dbReference type="NCBI Taxonomy" id="233413"/>
    <lineage>
        <taxon>Bacteria</taxon>
        <taxon>Bacillati</taxon>
        <taxon>Actinomycetota</taxon>
        <taxon>Actinomycetes</taxon>
        <taxon>Mycobacteriales</taxon>
        <taxon>Mycobacteriaceae</taxon>
        <taxon>Mycobacterium</taxon>
        <taxon>Mycobacterium tuberculosis complex</taxon>
    </lineage>
</organism>